<accession>P82879</accession>
<reference key="1">
    <citation type="journal article" date="2000" name="Peptides">
        <title>Purification and characterization of antimicrobial peptides from the skin of the North American green frog Rana clamitans.</title>
        <authorList>
            <person name="Halverson T."/>
            <person name="Basir Y.J."/>
            <person name="Knoop F.C."/>
            <person name="Conlon J.M."/>
        </authorList>
    </citation>
    <scope>PROTEIN SEQUENCE</scope>
    <scope>FUNCTION</scope>
    <scope>MASS SPECTROMETRY</scope>
    <scope>SUBCELLULAR LOCATION</scope>
    <source>
        <tissue>Skin secretion</tissue>
    </source>
</reference>
<feature type="peptide" id="PRO_0000043568" description="Ranatuerin-2Cb" evidence="1">
    <location>
        <begin position="1"/>
        <end position="27"/>
    </location>
</feature>
<feature type="disulfide bond" evidence="1">
    <location>
        <begin position="20"/>
        <end position="25"/>
    </location>
</feature>
<proteinExistence type="evidence at protein level"/>
<keyword id="KW-0878">Amphibian defense peptide</keyword>
<keyword id="KW-0044">Antibiotic</keyword>
<keyword id="KW-0929">Antimicrobial</keyword>
<keyword id="KW-0903">Direct protein sequencing</keyword>
<keyword id="KW-1015">Disulfide bond</keyword>
<keyword id="KW-0295">Fungicide</keyword>
<keyword id="KW-0964">Secreted</keyword>
<name>RN2B_LITCL</name>
<organism>
    <name type="scientific">Lithobates clamitans</name>
    <name type="common">Green frog</name>
    <name type="synonym">Rana clamitans</name>
    <dbReference type="NCBI Taxonomy" id="145282"/>
    <lineage>
        <taxon>Eukaryota</taxon>
        <taxon>Metazoa</taxon>
        <taxon>Chordata</taxon>
        <taxon>Craniata</taxon>
        <taxon>Vertebrata</taxon>
        <taxon>Euteleostomi</taxon>
        <taxon>Amphibia</taxon>
        <taxon>Batrachia</taxon>
        <taxon>Anura</taxon>
        <taxon>Neobatrachia</taxon>
        <taxon>Ranoidea</taxon>
        <taxon>Ranidae</taxon>
        <taxon>Lithobates</taxon>
    </lineage>
</organism>
<evidence type="ECO:0000269" key="1">
    <source>
    </source>
</evidence>
<evidence type="ECO:0000303" key="2">
    <source>
    </source>
</evidence>
<evidence type="ECO:0000305" key="3"/>
<evidence type="ECO:0000305" key="4">
    <source>
    </source>
</evidence>
<sequence length="27" mass="2786">GLFLDTLKGLAGKLLQGLKCIKAGCKP</sequence>
<protein>
    <recommendedName>
        <fullName evidence="2">Ranatuerin-2Cb</fullName>
    </recommendedName>
</protein>
<dbReference type="GO" id="GO:0005576">
    <property type="term" value="C:extracellular region"/>
    <property type="evidence" value="ECO:0007669"/>
    <property type="project" value="UniProtKB-SubCell"/>
</dbReference>
<dbReference type="GO" id="GO:0042742">
    <property type="term" value="P:defense response to bacterium"/>
    <property type="evidence" value="ECO:0007669"/>
    <property type="project" value="UniProtKB-KW"/>
</dbReference>
<dbReference type="GO" id="GO:0050832">
    <property type="term" value="P:defense response to fungus"/>
    <property type="evidence" value="ECO:0007669"/>
    <property type="project" value="UniProtKB-KW"/>
</dbReference>
<dbReference type="GO" id="GO:0031640">
    <property type="term" value="P:killing of cells of another organism"/>
    <property type="evidence" value="ECO:0007669"/>
    <property type="project" value="UniProtKB-KW"/>
</dbReference>
<comment type="function">
    <text evidence="1">Antibacterial activity against Gram-positive bacterium S.aureus (MIC=40 uM) and Gram-negative bacterium E.coli (MIC=2 uM). Has activity against C.albicans (MIC=46 uM).</text>
</comment>
<comment type="subcellular location">
    <subcellularLocation>
        <location evidence="1">Secreted</location>
    </subcellularLocation>
</comment>
<comment type="tissue specificity">
    <text evidence="4">Expressed by the skin glands.</text>
</comment>
<comment type="mass spectrometry" mass="2784.0" error="0.02" method="Electrospray" evidence="1"/>
<comment type="similarity">
    <text evidence="3">Belongs to the frog skin active peptide (FSAP) family. Ranatuerin subfamily.</text>
</comment>